<accession>B4UM59</accession>
<name>PROA_ANASK</name>
<evidence type="ECO:0000255" key="1">
    <source>
        <dbReference type="HAMAP-Rule" id="MF_00412"/>
    </source>
</evidence>
<feature type="chain" id="PRO_1000123773" description="Gamma-glutamyl phosphate reductase">
    <location>
        <begin position="1"/>
        <end position="427"/>
    </location>
</feature>
<dbReference type="EC" id="1.2.1.41" evidence="1"/>
<dbReference type="EMBL" id="CP001131">
    <property type="protein sequence ID" value="ACG71467.1"/>
    <property type="molecule type" value="Genomic_DNA"/>
</dbReference>
<dbReference type="RefSeq" id="WP_012524303.1">
    <property type="nucleotide sequence ID" value="NC_011145.1"/>
</dbReference>
<dbReference type="SMR" id="B4UM59"/>
<dbReference type="KEGG" id="ank:AnaeK_0225"/>
<dbReference type="HOGENOM" id="CLU_030231_0_0_7"/>
<dbReference type="OrthoDB" id="9809970at2"/>
<dbReference type="UniPathway" id="UPA00098">
    <property type="reaction ID" value="UER00360"/>
</dbReference>
<dbReference type="Proteomes" id="UP000001871">
    <property type="component" value="Chromosome"/>
</dbReference>
<dbReference type="GO" id="GO:0005737">
    <property type="term" value="C:cytoplasm"/>
    <property type="evidence" value="ECO:0007669"/>
    <property type="project" value="UniProtKB-SubCell"/>
</dbReference>
<dbReference type="GO" id="GO:0004350">
    <property type="term" value="F:glutamate-5-semialdehyde dehydrogenase activity"/>
    <property type="evidence" value="ECO:0007669"/>
    <property type="project" value="UniProtKB-UniRule"/>
</dbReference>
<dbReference type="GO" id="GO:0050661">
    <property type="term" value="F:NADP binding"/>
    <property type="evidence" value="ECO:0007669"/>
    <property type="project" value="InterPro"/>
</dbReference>
<dbReference type="GO" id="GO:0055129">
    <property type="term" value="P:L-proline biosynthetic process"/>
    <property type="evidence" value="ECO:0007669"/>
    <property type="project" value="UniProtKB-UniRule"/>
</dbReference>
<dbReference type="CDD" id="cd07079">
    <property type="entry name" value="ALDH_F18-19_ProA-GPR"/>
    <property type="match status" value="1"/>
</dbReference>
<dbReference type="FunFam" id="3.40.309.10:FF:000006">
    <property type="entry name" value="Gamma-glutamyl phosphate reductase"/>
    <property type="match status" value="1"/>
</dbReference>
<dbReference type="Gene3D" id="3.40.605.10">
    <property type="entry name" value="Aldehyde Dehydrogenase, Chain A, domain 1"/>
    <property type="match status" value="1"/>
</dbReference>
<dbReference type="Gene3D" id="3.40.309.10">
    <property type="entry name" value="Aldehyde Dehydrogenase, Chain A, domain 2"/>
    <property type="match status" value="1"/>
</dbReference>
<dbReference type="HAMAP" id="MF_00412">
    <property type="entry name" value="ProA"/>
    <property type="match status" value="1"/>
</dbReference>
<dbReference type="InterPro" id="IPR016161">
    <property type="entry name" value="Ald_DH/histidinol_DH"/>
</dbReference>
<dbReference type="InterPro" id="IPR016163">
    <property type="entry name" value="Ald_DH_C"/>
</dbReference>
<dbReference type="InterPro" id="IPR016162">
    <property type="entry name" value="Ald_DH_N"/>
</dbReference>
<dbReference type="InterPro" id="IPR015590">
    <property type="entry name" value="Aldehyde_DH_dom"/>
</dbReference>
<dbReference type="InterPro" id="IPR020593">
    <property type="entry name" value="G-glutamylP_reductase_CS"/>
</dbReference>
<dbReference type="InterPro" id="IPR012134">
    <property type="entry name" value="Glu-5-SA_DH"/>
</dbReference>
<dbReference type="InterPro" id="IPR000965">
    <property type="entry name" value="GPR_dom"/>
</dbReference>
<dbReference type="NCBIfam" id="NF001221">
    <property type="entry name" value="PRK00197.1"/>
    <property type="match status" value="1"/>
</dbReference>
<dbReference type="NCBIfam" id="TIGR00407">
    <property type="entry name" value="proA"/>
    <property type="match status" value="1"/>
</dbReference>
<dbReference type="PANTHER" id="PTHR11063:SF8">
    <property type="entry name" value="DELTA-1-PYRROLINE-5-CARBOXYLATE SYNTHASE"/>
    <property type="match status" value="1"/>
</dbReference>
<dbReference type="PANTHER" id="PTHR11063">
    <property type="entry name" value="GLUTAMATE SEMIALDEHYDE DEHYDROGENASE"/>
    <property type="match status" value="1"/>
</dbReference>
<dbReference type="Pfam" id="PF00171">
    <property type="entry name" value="Aldedh"/>
    <property type="match status" value="1"/>
</dbReference>
<dbReference type="PIRSF" id="PIRSF000151">
    <property type="entry name" value="GPR"/>
    <property type="match status" value="1"/>
</dbReference>
<dbReference type="SUPFAM" id="SSF53720">
    <property type="entry name" value="ALDH-like"/>
    <property type="match status" value="1"/>
</dbReference>
<dbReference type="PROSITE" id="PS01223">
    <property type="entry name" value="PROA"/>
    <property type="match status" value="1"/>
</dbReference>
<proteinExistence type="inferred from homology"/>
<reference key="1">
    <citation type="submission" date="2008-08" db="EMBL/GenBank/DDBJ databases">
        <title>Complete sequence of Anaeromyxobacter sp. K.</title>
        <authorList>
            <consortium name="US DOE Joint Genome Institute"/>
            <person name="Lucas S."/>
            <person name="Copeland A."/>
            <person name="Lapidus A."/>
            <person name="Glavina del Rio T."/>
            <person name="Dalin E."/>
            <person name="Tice H."/>
            <person name="Bruce D."/>
            <person name="Goodwin L."/>
            <person name="Pitluck S."/>
            <person name="Saunders E."/>
            <person name="Brettin T."/>
            <person name="Detter J.C."/>
            <person name="Han C."/>
            <person name="Larimer F."/>
            <person name="Land M."/>
            <person name="Hauser L."/>
            <person name="Kyrpides N."/>
            <person name="Ovchinnikiva G."/>
            <person name="Beliaev A."/>
        </authorList>
    </citation>
    <scope>NUCLEOTIDE SEQUENCE [LARGE SCALE GENOMIC DNA]</scope>
    <source>
        <strain>K</strain>
    </source>
</reference>
<organism>
    <name type="scientific">Anaeromyxobacter sp. (strain K)</name>
    <dbReference type="NCBI Taxonomy" id="447217"/>
    <lineage>
        <taxon>Bacteria</taxon>
        <taxon>Pseudomonadati</taxon>
        <taxon>Myxococcota</taxon>
        <taxon>Myxococcia</taxon>
        <taxon>Myxococcales</taxon>
        <taxon>Cystobacterineae</taxon>
        <taxon>Anaeromyxobacteraceae</taxon>
        <taxon>Anaeromyxobacter</taxon>
    </lineage>
</organism>
<protein>
    <recommendedName>
        <fullName evidence="1">Gamma-glutamyl phosphate reductase</fullName>
        <shortName evidence="1">GPR</shortName>
        <ecNumber evidence="1">1.2.1.41</ecNumber>
    </recommendedName>
    <alternativeName>
        <fullName evidence="1">Glutamate-5-semialdehyde dehydrogenase</fullName>
    </alternativeName>
    <alternativeName>
        <fullName evidence="1">Glutamyl-gamma-semialdehyde dehydrogenase</fullName>
        <shortName evidence="1">GSA dehydrogenase</shortName>
    </alternativeName>
</protein>
<sequence length="427" mass="45243">MRKEKSLGLAAEMRTLAEASREAARALSHADPRRKDAALRAAAEAIGRREKRILSENARDVAAARAAGQNAAYLDRLKLDPKRLAGIAAALHEIAGLRDPVGEVTASWRRPNGLEIRKVRIPLGVVLMVYEARPNVTVDAAALCLKSGNAAILRPGSDALRSSLALAAAFAEGLEKAGLPAASAQVVPTPDREATYELLALDDLIDLAIPRGGPSLIRAVAERSRVPVLKHYQGVCHLYLDASAPPQQAVDLALNGKVQRPGVCNATECLLVHRGAAGKLLPPVGRALADAGVELRCDPTALTILKRAGVAAVPARPDDFGKEFLDRILAVRVVADLDGALDHIARYGSLHTEAIVTRDLASARRFQREVDASAVMVNASTRFNDGGELGLGAEIGISTTKLHAFGPMGLAELTTQKFLVEGEGHVR</sequence>
<comment type="function">
    <text evidence="1">Catalyzes the NADPH-dependent reduction of L-glutamate 5-phosphate into L-glutamate 5-semialdehyde and phosphate. The product spontaneously undergoes cyclization to form 1-pyrroline-5-carboxylate.</text>
</comment>
<comment type="catalytic activity">
    <reaction evidence="1">
        <text>L-glutamate 5-semialdehyde + phosphate + NADP(+) = L-glutamyl 5-phosphate + NADPH + H(+)</text>
        <dbReference type="Rhea" id="RHEA:19541"/>
        <dbReference type="ChEBI" id="CHEBI:15378"/>
        <dbReference type="ChEBI" id="CHEBI:43474"/>
        <dbReference type="ChEBI" id="CHEBI:57783"/>
        <dbReference type="ChEBI" id="CHEBI:58066"/>
        <dbReference type="ChEBI" id="CHEBI:58274"/>
        <dbReference type="ChEBI" id="CHEBI:58349"/>
        <dbReference type="EC" id="1.2.1.41"/>
    </reaction>
</comment>
<comment type="pathway">
    <text evidence="1">Amino-acid biosynthesis; L-proline biosynthesis; L-glutamate 5-semialdehyde from L-glutamate: step 2/2.</text>
</comment>
<comment type="subcellular location">
    <subcellularLocation>
        <location evidence="1">Cytoplasm</location>
    </subcellularLocation>
</comment>
<comment type="similarity">
    <text evidence="1">Belongs to the gamma-glutamyl phosphate reductase family.</text>
</comment>
<gene>
    <name evidence="1" type="primary">proA</name>
    <name type="ordered locus">AnaeK_0225</name>
</gene>
<keyword id="KW-0028">Amino-acid biosynthesis</keyword>
<keyword id="KW-0963">Cytoplasm</keyword>
<keyword id="KW-0521">NADP</keyword>
<keyword id="KW-0560">Oxidoreductase</keyword>
<keyword id="KW-0641">Proline biosynthesis</keyword>